<accession>C5CA81</accession>
<evidence type="ECO:0000255" key="1">
    <source>
        <dbReference type="HAMAP-Rule" id="MF_00722"/>
    </source>
</evidence>
<name>NUCS_MICLC</name>
<comment type="function">
    <text evidence="1">Cleaves both 3' and 5' ssDNA extremities of branched DNA structures.</text>
</comment>
<comment type="subcellular location">
    <subcellularLocation>
        <location evidence="1">Cytoplasm</location>
    </subcellularLocation>
</comment>
<comment type="similarity">
    <text evidence="1">Belongs to the NucS endonuclease family.</text>
</comment>
<gene>
    <name evidence="1" type="primary">nucS</name>
    <name type="ordered locus">Mlut_08210</name>
</gene>
<sequence length="231" mass="25430">MRLVIARCSVTYEGRLNAHLPTATRLLMVKADGSVLVHSDGGSYKPLNWMSPPATLHVEEPSPDQADQGVTQVWRVQAKKSDDRLIVLIEEVLADDSHELGVDPGLVKDGVEADLQRLLAEQISLLGDGHTLVRREYMTAIGPVDILARDADGGTVAVELKRRGDIDGVEQLTRYLELMNRDPLLAPVRGVFAAQQIKPQARTLAEDRGIRCVTLDYDAMRGVDDAESRLF</sequence>
<feature type="chain" id="PRO_1000212715" description="Endonuclease NucS">
    <location>
        <begin position="1"/>
        <end position="231"/>
    </location>
</feature>
<organism>
    <name type="scientific">Micrococcus luteus (strain ATCC 4698 / DSM 20030 / JCM 1464 / CCM 169 / CCUG 5858 / IAM 1056 / NBRC 3333 / NCIMB 9278 / NCTC 2665 / VKM Ac-2230)</name>
    <name type="common">Micrococcus lysodeikticus</name>
    <dbReference type="NCBI Taxonomy" id="465515"/>
    <lineage>
        <taxon>Bacteria</taxon>
        <taxon>Bacillati</taxon>
        <taxon>Actinomycetota</taxon>
        <taxon>Actinomycetes</taxon>
        <taxon>Micrococcales</taxon>
        <taxon>Micrococcaceae</taxon>
        <taxon>Micrococcus</taxon>
    </lineage>
</organism>
<protein>
    <recommendedName>
        <fullName evidence="1">Endonuclease NucS</fullName>
        <ecNumber evidence="1">3.1.-.-</ecNumber>
    </recommendedName>
</protein>
<reference key="1">
    <citation type="journal article" date="2010" name="J. Bacteriol.">
        <title>Genome sequence of the Fleming strain of Micrococcus luteus, a simple free-living actinobacterium.</title>
        <authorList>
            <person name="Young M."/>
            <person name="Artsatbanov V."/>
            <person name="Beller H.R."/>
            <person name="Chandra G."/>
            <person name="Chater K.F."/>
            <person name="Dover L.G."/>
            <person name="Goh E.B."/>
            <person name="Kahan T."/>
            <person name="Kaprelyants A.S."/>
            <person name="Kyrpides N."/>
            <person name="Lapidus A."/>
            <person name="Lowry S.R."/>
            <person name="Lykidis A."/>
            <person name="Mahillon J."/>
            <person name="Markowitz V."/>
            <person name="Mavromatis K."/>
            <person name="Mukamolova G.V."/>
            <person name="Oren A."/>
            <person name="Rokem J.S."/>
            <person name="Smith M.C."/>
            <person name="Young D.I."/>
            <person name="Greenblatt C.L."/>
        </authorList>
    </citation>
    <scope>NUCLEOTIDE SEQUENCE [LARGE SCALE GENOMIC DNA]</scope>
    <source>
        <strain>ATCC 4698 / DSM 20030 / JCM 1464 / CCM 169 / CCUG 5858 / IAM 1056 / NBRC 3333 / NCIMB 9278 / NCTC 2665 / VKM Ac-2230</strain>
    </source>
</reference>
<dbReference type="EC" id="3.1.-.-" evidence="1"/>
<dbReference type="EMBL" id="CP001628">
    <property type="protein sequence ID" value="ACS30350.1"/>
    <property type="molecule type" value="Genomic_DNA"/>
</dbReference>
<dbReference type="RefSeq" id="WP_002857250.1">
    <property type="nucleotide sequence ID" value="NZ_WBMF01000002.1"/>
</dbReference>
<dbReference type="SMR" id="C5CA81"/>
<dbReference type="STRING" id="465515.Mlut_08210"/>
<dbReference type="EnsemblBacteria" id="ACS30350">
    <property type="protein sequence ID" value="ACS30350"/>
    <property type="gene ID" value="Mlut_08210"/>
</dbReference>
<dbReference type="GeneID" id="93344983"/>
<dbReference type="KEGG" id="mlu:Mlut_08210"/>
<dbReference type="eggNOG" id="COG1637">
    <property type="taxonomic scope" value="Bacteria"/>
</dbReference>
<dbReference type="HOGENOM" id="CLU_069350_0_0_11"/>
<dbReference type="Proteomes" id="UP000000738">
    <property type="component" value="Chromosome"/>
</dbReference>
<dbReference type="GO" id="GO:0005737">
    <property type="term" value="C:cytoplasm"/>
    <property type="evidence" value="ECO:0007669"/>
    <property type="project" value="UniProtKB-SubCell"/>
</dbReference>
<dbReference type="GO" id="GO:0003677">
    <property type="term" value="F:DNA binding"/>
    <property type="evidence" value="ECO:0007669"/>
    <property type="project" value="UniProtKB-KW"/>
</dbReference>
<dbReference type="GO" id="GO:0000014">
    <property type="term" value="F:single-stranded DNA endodeoxyribonuclease activity"/>
    <property type="evidence" value="ECO:0007669"/>
    <property type="project" value="UniProtKB-UniRule"/>
</dbReference>
<dbReference type="CDD" id="cd22341">
    <property type="entry name" value="NucS-like"/>
    <property type="match status" value="1"/>
</dbReference>
<dbReference type="Gene3D" id="2.70.180.20">
    <property type="match status" value="1"/>
</dbReference>
<dbReference type="Gene3D" id="3.40.1350.10">
    <property type="match status" value="1"/>
</dbReference>
<dbReference type="HAMAP" id="MF_00722">
    <property type="entry name" value="NucS"/>
    <property type="match status" value="1"/>
</dbReference>
<dbReference type="InterPro" id="IPR002793">
    <property type="entry name" value="Endonuclease_NucS"/>
</dbReference>
<dbReference type="InterPro" id="IPR048301">
    <property type="entry name" value="NucS_C"/>
</dbReference>
<dbReference type="InterPro" id="IPR048302">
    <property type="entry name" value="NucS_N"/>
</dbReference>
<dbReference type="InterPro" id="IPR049173">
    <property type="entry name" value="NucS_N_sf"/>
</dbReference>
<dbReference type="InterPro" id="IPR011856">
    <property type="entry name" value="tRNA_endonuc-like_dom_sf"/>
</dbReference>
<dbReference type="NCBIfam" id="NF002876">
    <property type="entry name" value="PRK03298.1"/>
    <property type="match status" value="1"/>
</dbReference>
<dbReference type="PANTHER" id="PTHR38814">
    <property type="entry name" value="ENDONUCLEASE NUCS"/>
    <property type="match status" value="1"/>
</dbReference>
<dbReference type="PANTHER" id="PTHR38814:SF1">
    <property type="entry name" value="ENDONUCLEASE NUCS"/>
    <property type="match status" value="1"/>
</dbReference>
<dbReference type="Pfam" id="PF01939">
    <property type="entry name" value="NucS_C"/>
    <property type="match status" value="1"/>
</dbReference>
<dbReference type="Pfam" id="PF21003">
    <property type="entry name" value="NucS_N"/>
    <property type="match status" value="1"/>
</dbReference>
<proteinExistence type="inferred from homology"/>
<keyword id="KW-0963">Cytoplasm</keyword>
<keyword id="KW-0238">DNA-binding</keyword>
<keyword id="KW-0255">Endonuclease</keyword>
<keyword id="KW-0378">Hydrolase</keyword>
<keyword id="KW-0540">Nuclease</keyword>
<keyword id="KW-1185">Reference proteome</keyword>